<gene>
    <name type="ORF">CC1G_03624</name>
</gene>
<keyword id="KW-0004">4Fe-4S</keyword>
<keyword id="KW-0408">Iron</keyword>
<keyword id="KW-0411">Iron-sulfur</keyword>
<keyword id="KW-0479">Metal-binding</keyword>
<keyword id="KW-0496">Mitochondrion</keyword>
<keyword id="KW-1185">Reference proteome</keyword>
<keyword id="KW-0949">S-adenosyl-L-methionine</keyword>
<keyword id="KW-0808">Transferase</keyword>
<keyword id="KW-0809">Transit peptide</keyword>
<dbReference type="EC" id="2.8.1.8" evidence="1"/>
<dbReference type="EMBL" id="AACS02000001">
    <property type="protein sequence ID" value="EAU92837.1"/>
    <property type="molecule type" value="Genomic_DNA"/>
</dbReference>
<dbReference type="RefSeq" id="XP_001828830.1">
    <property type="nucleotide sequence ID" value="XM_001828778.2"/>
</dbReference>
<dbReference type="SMR" id="A8N1T1"/>
<dbReference type="FunCoup" id="A8N1T1">
    <property type="interactions" value="351"/>
</dbReference>
<dbReference type="STRING" id="240176.A8N1T1"/>
<dbReference type="GeneID" id="6005256"/>
<dbReference type="KEGG" id="cci:CC1G_03624"/>
<dbReference type="VEuPathDB" id="FungiDB:CC1G_03624"/>
<dbReference type="eggNOG" id="KOG2672">
    <property type="taxonomic scope" value="Eukaryota"/>
</dbReference>
<dbReference type="HOGENOM" id="CLU_033144_2_0_1"/>
<dbReference type="InParanoid" id="A8N1T1"/>
<dbReference type="OMA" id="RSCAFCQ"/>
<dbReference type="OrthoDB" id="3231at2759"/>
<dbReference type="UniPathway" id="UPA00538">
    <property type="reaction ID" value="UER00593"/>
</dbReference>
<dbReference type="Proteomes" id="UP000001861">
    <property type="component" value="Unassembled WGS sequence"/>
</dbReference>
<dbReference type="GO" id="GO:0005739">
    <property type="term" value="C:mitochondrion"/>
    <property type="evidence" value="ECO:0007669"/>
    <property type="project" value="UniProtKB-SubCell"/>
</dbReference>
<dbReference type="GO" id="GO:0051539">
    <property type="term" value="F:4 iron, 4 sulfur cluster binding"/>
    <property type="evidence" value="ECO:0007669"/>
    <property type="project" value="UniProtKB-UniRule"/>
</dbReference>
<dbReference type="GO" id="GO:0016992">
    <property type="term" value="F:lipoate synthase activity"/>
    <property type="evidence" value="ECO:0007669"/>
    <property type="project" value="UniProtKB-UniRule"/>
</dbReference>
<dbReference type="GO" id="GO:0046872">
    <property type="term" value="F:metal ion binding"/>
    <property type="evidence" value="ECO:0007669"/>
    <property type="project" value="UniProtKB-KW"/>
</dbReference>
<dbReference type="CDD" id="cd01335">
    <property type="entry name" value="Radical_SAM"/>
    <property type="match status" value="1"/>
</dbReference>
<dbReference type="FunFam" id="3.20.20.70:FF:000036">
    <property type="entry name" value="Lipoyl synthase, mitochondrial"/>
    <property type="match status" value="1"/>
</dbReference>
<dbReference type="Gene3D" id="3.20.20.70">
    <property type="entry name" value="Aldolase class I"/>
    <property type="match status" value="1"/>
</dbReference>
<dbReference type="HAMAP" id="MF_00206">
    <property type="entry name" value="Lipoyl_synth"/>
    <property type="match status" value="1"/>
</dbReference>
<dbReference type="InterPro" id="IPR013785">
    <property type="entry name" value="Aldolase_TIM"/>
</dbReference>
<dbReference type="InterPro" id="IPR006638">
    <property type="entry name" value="Elp3/MiaA/NifB-like_rSAM"/>
</dbReference>
<dbReference type="InterPro" id="IPR031691">
    <property type="entry name" value="LIAS_N"/>
</dbReference>
<dbReference type="InterPro" id="IPR003698">
    <property type="entry name" value="Lipoyl_synth"/>
</dbReference>
<dbReference type="InterPro" id="IPR007197">
    <property type="entry name" value="rSAM"/>
</dbReference>
<dbReference type="NCBIfam" id="TIGR00510">
    <property type="entry name" value="lipA"/>
    <property type="match status" value="1"/>
</dbReference>
<dbReference type="NCBIfam" id="NF004019">
    <property type="entry name" value="PRK05481.1"/>
    <property type="match status" value="1"/>
</dbReference>
<dbReference type="NCBIfam" id="NF009544">
    <property type="entry name" value="PRK12928.1"/>
    <property type="match status" value="1"/>
</dbReference>
<dbReference type="PANTHER" id="PTHR10949">
    <property type="entry name" value="LIPOYL SYNTHASE"/>
    <property type="match status" value="1"/>
</dbReference>
<dbReference type="PANTHER" id="PTHR10949:SF0">
    <property type="entry name" value="LIPOYL SYNTHASE, MITOCHONDRIAL"/>
    <property type="match status" value="1"/>
</dbReference>
<dbReference type="Pfam" id="PF16881">
    <property type="entry name" value="LIAS_N"/>
    <property type="match status" value="1"/>
</dbReference>
<dbReference type="Pfam" id="PF04055">
    <property type="entry name" value="Radical_SAM"/>
    <property type="match status" value="1"/>
</dbReference>
<dbReference type="PIRSF" id="PIRSF005963">
    <property type="entry name" value="Lipoyl_synth"/>
    <property type="match status" value="1"/>
</dbReference>
<dbReference type="SFLD" id="SFLDF00271">
    <property type="entry name" value="lipoyl_synthase"/>
    <property type="match status" value="1"/>
</dbReference>
<dbReference type="SFLD" id="SFLDS00029">
    <property type="entry name" value="Radical_SAM"/>
    <property type="match status" value="1"/>
</dbReference>
<dbReference type="SMART" id="SM00729">
    <property type="entry name" value="Elp3"/>
    <property type="match status" value="1"/>
</dbReference>
<dbReference type="SUPFAM" id="SSF102114">
    <property type="entry name" value="Radical SAM enzymes"/>
    <property type="match status" value="1"/>
</dbReference>
<dbReference type="PROSITE" id="PS51918">
    <property type="entry name" value="RADICAL_SAM"/>
    <property type="match status" value="1"/>
</dbReference>
<accession>A8N1T1</accession>
<name>LIPA_COPC7</name>
<organism>
    <name type="scientific">Coprinopsis cinerea (strain Okayama-7 / 130 / ATCC MYA-4618 / FGSC 9003)</name>
    <name type="common">Inky cap fungus</name>
    <name type="synonym">Hormographiella aspergillata</name>
    <dbReference type="NCBI Taxonomy" id="240176"/>
    <lineage>
        <taxon>Eukaryota</taxon>
        <taxon>Fungi</taxon>
        <taxon>Dikarya</taxon>
        <taxon>Basidiomycota</taxon>
        <taxon>Agaricomycotina</taxon>
        <taxon>Agaricomycetes</taxon>
        <taxon>Agaricomycetidae</taxon>
        <taxon>Agaricales</taxon>
        <taxon>Agaricineae</taxon>
        <taxon>Psathyrellaceae</taxon>
        <taxon>Coprinopsis</taxon>
    </lineage>
</organism>
<comment type="function">
    <text evidence="1">Catalyzes the radical-mediated insertion of two sulfur atoms into the C-6 and C-8 positions of the octanoyl moiety bound to the lipoyl domains of lipoate-dependent enzymes, thereby converting the octanoylated domains into lipoylated derivatives.</text>
</comment>
<comment type="catalytic activity">
    <reaction evidence="1">
        <text>[[Fe-S] cluster scaffold protein carrying a second [4Fe-4S](2+) cluster] + N(6)-octanoyl-L-lysyl-[protein] + 2 oxidized [2Fe-2S]-[ferredoxin] + 2 S-adenosyl-L-methionine + 4 H(+) = [[Fe-S] cluster scaffold protein] + N(6)-[(R)-dihydrolipoyl]-L-lysyl-[protein] + 4 Fe(3+) + 2 hydrogen sulfide + 2 5'-deoxyadenosine + 2 L-methionine + 2 reduced [2Fe-2S]-[ferredoxin]</text>
        <dbReference type="Rhea" id="RHEA:16585"/>
        <dbReference type="Rhea" id="RHEA-COMP:9928"/>
        <dbReference type="Rhea" id="RHEA-COMP:10000"/>
        <dbReference type="Rhea" id="RHEA-COMP:10001"/>
        <dbReference type="Rhea" id="RHEA-COMP:10475"/>
        <dbReference type="Rhea" id="RHEA-COMP:14568"/>
        <dbReference type="Rhea" id="RHEA-COMP:14569"/>
        <dbReference type="ChEBI" id="CHEBI:15378"/>
        <dbReference type="ChEBI" id="CHEBI:17319"/>
        <dbReference type="ChEBI" id="CHEBI:29034"/>
        <dbReference type="ChEBI" id="CHEBI:29919"/>
        <dbReference type="ChEBI" id="CHEBI:33722"/>
        <dbReference type="ChEBI" id="CHEBI:33737"/>
        <dbReference type="ChEBI" id="CHEBI:33738"/>
        <dbReference type="ChEBI" id="CHEBI:57844"/>
        <dbReference type="ChEBI" id="CHEBI:59789"/>
        <dbReference type="ChEBI" id="CHEBI:78809"/>
        <dbReference type="ChEBI" id="CHEBI:83100"/>
        <dbReference type="EC" id="2.8.1.8"/>
    </reaction>
</comment>
<comment type="cofactor">
    <cofactor evidence="1">
        <name>[4Fe-4S] cluster</name>
        <dbReference type="ChEBI" id="CHEBI:49883"/>
    </cofactor>
    <text evidence="1">Binds 2 [4Fe-4S] clusters per subunit. One cluster is coordinated with 3 cysteines and an exchangeable S-adenosyl-L-methionine.</text>
</comment>
<comment type="pathway">
    <text evidence="1">Protein modification; protein lipoylation via endogenous pathway; protein N(6)-(lipoyl)lysine from octanoyl-[acyl-carrier-protein]: step 2/2.</text>
</comment>
<comment type="subcellular location">
    <subcellularLocation>
        <location evidence="1">Mitochondrion</location>
    </subcellularLocation>
</comment>
<comment type="similarity">
    <text evidence="1">Belongs to the radical SAM superfamily. Lipoyl synthase family.</text>
</comment>
<sequence>MALYRAPKLQRSLLNRCLATASTTPAAASTSRTSTFRKTLEEGPTLDDFIAGDVPNNRVVLGNTSAPRLPSYLKTSIPTGASFSKIKKDLRGLNLHTVCEEARCPNIGDCWGGKPGATEAEGRSAATATIMLMGDTCTRGCRFCSVKTSRTPPPLDPHEPENTAEAISRWGLGYIVLTSVDRDDLADGGARHFAETISKIKQKAPHILVEALTGDFAGNLEHVSLVAKSGLDVYAHNIETVEALTPFVRDRRATFRQSLSVLKRAKEEGVKVTKTSIMLGVGETEDQVLDALKELRKVDVDVVTFGQYMRPTKRHMKVDRYVEPAEFDRWKQVAEDLGFLYVASGPLVRSSYKAGEFYIENVLKGKSVNKRVKNLTMESELSEKSASASL</sequence>
<proteinExistence type="inferred from homology"/>
<feature type="transit peptide" description="Mitochondrion" evidence="1">
    <location>
        <begin position="1"/>
        <end position="18"/>
    </location>
</feature>
<feature type="chain" id="PRO_0000398264" description="Lipoyl synthase, mitochondrial">
    <location>
        <begin position="19"/>
        <end position="390"/>
    </location>
</feature>
<feature type="domain" description="Radical SAM core" evidence="2">
    <location>
        <begin position="120"/>
        <end position="340"/>
    </location>
</feature>
<feature type="binding site" evidence="1">
    <location>
        <position position="99"/>
    </location>
    <ligand>
        <name>[4Fe-4S] cluster</name>
        <dbReference type="ChEBI" id="CHEBI:49883"/>
        <label>1</label>
    </ligand>
</feature>
<feature type="binding site" evidence="1">
    <location>
        <position position="104"/>
    </location>
    <ligand>
        <name>[4Fe-4S] cluster</name>
        <dbReference type="ChEBI" id="CHEBI:49883"/>
        <label>1</label>
    </ligand>
</feature>
<feature type="binding site" evidence="1">
    <location>
        <position position="110"/>
    </location>
    <ligand>
        <name>[4Fe-4S] cluster</name>
        <dbReference type="ChEBI" id="CHEBI:49883"/>
        <label>1</label>
    </ligand>
</feature>
<feature type="binding site" evidence="1">
    <location>
        <position position="137"/>
    </location>
    <ligand>
        <name>[4Fe-4S] cluster</name>
        <dbReference type="ChEBI" id="CHEBI:49883"/>
        <label>2</label>
        <note>4Fe-4S-S-AdoMet</note>
    </ligand>
</feature>
<feature type="binding site" evidence="1">
    <location>
        <position position="141"/>
    </location>
    <ligand>
        <name>[4Fe-4S] cluster</name>
        <dbReference type="ChEBI" id="CHEBI:49883"/>
        <label>2</label>
        <note>4Fe-4S-S-AdoMet</note>
    </ligand>
</feature>
<feature type="binding site" evidence="1">
    <location>
        <position position="144"/>
    </location>
    <ligand>
        <name>[4Fe-4S] cluster</name>
        <dbReference type="ChEBI" id="CHEBI:49883"/>
        <label>2</label>
        <note>4Fe-4S-S-AdoMet</note>
    </ligand>
</feature>
<feature type="binding site" evidence="1">
    <location>
        <position position="351"/>
    </location>
    <ligand>
        <name>[4Fe-4S] cluster</name>
        <dbReference type="ChEBI" id="CHEBI:49883"/>
        <label>1</label>
    </ligand>
</feature>
<protein>
    <recommendedName>
        <fullName evidence="1">Lipoyl synthase, mitochondrial</fullName>
        <ecNumber evidence="1">2.8.1.8</ecNumber>
    </recommendedName>
    <alternativeName>
        <fullName evidence="1">Lipoate synthase</fullName>
        <shortName evidence="1">LS</shortName>
        <shortName evidence="1">Lip-syn</shortName>
    </alternativeName>
    <alternativeName>
        <fullName evidence="1">Lipoic acid synthase</fullName>
    </alternativeName>
</protein>
<evidence type="ECO:0000255" key="1">
    <source>
        <dbReference type="HAMAP-Rule" id="MF_03123"/>
    </source>
</evidence>
<evidence type="ECO:0000255" key="2">
    <source>
        <dbReference type="PROSITE-ProRule" id="PRU01266"/>
    </source>
</evidence>
<reference key="1">
    <citation type="journal article" date="2010" name="Proc. Natl. Acad. Sci. U.S.A.">
        <title>Insights into evolution of multicellular fungi from the assembled chromosomes of the mushroom Coprinopsis cinerea (Coprinus cinereus).</title>
        <authorList>
            <person name="Stajich J.E."/>
            <person name="Wilke S.K."/>
            <person name="Ahren D."/>
            <person name="Au C.H."/>
            <person name="Birren B.W."/>
            <person name="Borodovsky M."/>
            <person name="Burns C."/>
            <person name="Canbaeck B."/>
            <person name="Casselton L.A."/>
            <person name="Cheng C.K."/>
            <person name="Deng J."/>
            <person name="Dietrich F.S."/>
            <person name="Fargo D.C."/>
            <person name="Farman M.L."/>
            <person name="Gathman A.C."/>
            <person name="Goldberg J."/>
            <person name="Guigo R."/>
            <person name="Hoegger P.J."/>
            <person name="Hooker J.B."/>
            <person name="Huggins A."/>
            <person name="James T.Y."/>
            <person name="Kamada T."/>
            <person name="Kilaru S."/>
            <person name="Kodira C."/>
            <person name="Kuees U."/>
            <person name="Kupfer D."/>
            <person name="Kwan H.S."/>
            <person name="Lomsadze A."/>
            <person name="Li W."/>
            <person name="Lilly W.W."/>
            <person name="Ma L.-J."/>
            <person name="Mackey A.J."/>
            <person name="Manning G."/>
            <person name="Martin F."/>
            <person name="Muraguchi H."/>
            <person name="Natvig D.O."/>
            <person name="Palmerini H."/>
            <person name="Ramesh M.A."/>
            <person name="Rehmeyer C.J."/>
            <person name="Roe B.A."/>
            <person name="Shenoy N."/>
            <person name="Stanke M."/>
            <person name="Ter-Hovhannisyan V."/>
            <person name="Tunlid A."/>
            <person name="Velagapudi R."/>
            <person name="Vision T.J."/>
            <person name="Zeng Q."/>
            <person name="Zolan M.E."/>
            <person name="Pukkila P.J."/>
        </authorList>
    </citation>
    <scope>NUCLEOTIDE SEQUENCE [LARGE SCALE GENOMIC DNA]</scope>
    <source>
        <strain>Okayama-7 / 130 / ATCC MYA-4618 / FGSC 9003</strain>
    </source>
</reference>